<comment type="function">
    <text evidence="1">Catalyzes the deamination of various vicinal amino-alcohols to oxo compounds. Allows this organism to utilize ethanolamine as the sole source of nitrogen and carbon in the presence of external vitamin B12.</text>
</comment>
<comment type="catalytic activity">
    <reaction evidence="1">
        <text>ethanolamine = acetaldehyde + NH4(+)</text>
        <dbReference type="Rhea" id="RHEA:15313"/>
        <dbReference type="ChEBI" id="CHEBI:15343"/>
        <dbReference type="ChEBI" id="CHEBI:28938"/>
        <dbReference type="ChEBI" id="CHEBI:57603"/>
        <dbReference type="EC" id="4.3.1.7"/>
    </reaction>
</comment>
<comment type="cofactor">
    <cofactor evidence="1">
        <name>adenosylcob(III)alamin</name>
        <dbReference type="ChEBI" id="CHEBI:18408"/>
    </cofactor>
    <text evidence="1">Binds between the large and small subunits.</text>
</comment>
<comment type="pathway">
    <text evidence="1">Amine and polyamine degradation; ethanolamine degradation.</text>
</comment>
<comment type="subunit">
    <text evidence="1">The basic unit is a heterodimer which dimerizes to form tetramers. The heterotetramers trimerize; 6 large subunits form a core ring with 6 small subunits projecting outwards.</text>
</comment>
<comment type="subcellular location">
    <subcellularLocation>
        <location evidence="1">Bacterial microcompartment</location>
    </subcellularLocation>
</comment>
<comment type="similarity">
    <text evidence="1">Belongs to the EutC family.</text>
</comment>
<keyword id="KW-1283">Bacterial microcompartment</keyword>
<keyword id="KW-0846">Cobalamin</keyword>
<keyword id="KW-0170">Cobalt</keyword>
<keyword id="KW-0456">Lyase</keyword>
<feature type="chain" id="PRO_1000130100" description="Ethanolamine ammonia-lyase small subunit">
    <location>
        <begin position="1"/>
        <end position="298"/>
    </location>
</feature>
<feature type="binding site" evidence="1">
    <location>
        <position position="210"/>
    </location>
    <ligand>
        <name>adenosylcob(III)alamin</name>
        <dbReference type="ChEBI" id="CHEBI:18408"/>
    </ligand>
</feature>
<feature type="binding site" evidence="1">
    <location>
        <position position="231"/>
    </location>
    <ligand>
        <name>adenosylcob(III)alamin</name>
        <dbReference type="ChEBI" id="CHEBI:18408"/>
    </ligand>
</feature>
<feature type="binding site" evidence="1">
    <location>
        <position position="261"/>
    </location>
    <ligand>
        <name>adenosylcob(III)alamin</name>
        <dbReference type="ChEBI" id="CHEBI:18408"/>
    </ligand>
</feature>
<dbReference type="EC" id="4.3.1.7" evidence="1"/>
<dbReference type="EMBL" id="AM933173">
    <property type="protein sequence ID" value="CAR38314.1"/>
    <property type="molecule type" value="Genomic_DNA"/>
</dbReference>
<dbReference type="RefSeq" id="WP_000372354.1">
    <property type="nucleotide sequence ID" value="NC_011274.1"/>
</dbReference>
<dbReference type="SMR" id="B5RCS8"/>
<dbReference type="KEGG" id="seg:SG2488"/>
<dbReference type="HOGENOM" id="CLU_068224_2_0_6"/>
<dbReference type="UniPathway" id="UPA00560"/>
<dbReference type="Proteomes" id="UP000008321">
    <property type="component" value="Chromosome"/>
</dbReference>
<dbReference type="GO" id="GO:0009350">
    <property type="term" value="C:ethanolamine ammonia-lyase complex"/>
    <property type="evidence" value="ECO:0007669"/>
    <property type="project" value="UniProtKB-UniRule"/>
</dbReference>
<dbReference type="GO" id="GO:0031471">
    <property type="term" value="C:ethanolamine degradation polyhedral organelle"/>
    <property type="evidence" value="ECO:0007669"/>
    <property type="project" value="UniProtKB-UniRule"/>
</dbReference>
<dbReference type="GO" id="GO:0031419">
    <property type="term" value="F:cobalamin binding"/>
    <property type="evidence" value="ECO:0007669"/>
    <property type="project" value="UniProtKB-UniRule"/>
</dbReference>
<dbReference type="GO" id="GO:0008851">
    <property type="term" value="F:ethanolamine ammonia-lyase activity"/>
    <property type="evidence" value="ECO:0007669"/>
    <property type="project" value="UniProtKB-UniRule"/>
</dbReference>
<dbReference type="GO" id="GO:0006520">
    <property type="term" value="P:amino acid metabolic process"/>
    <property type="evidence" value="ECO:0007669"/>
    <property type="project" value="InterPro"/>
</dbReference>
<dbReference type="GO" id="GO:0046336">
    <property type="term" value="P:ethanolamine catabolic process"/>
    <property type="evidence" value="ECO:0007669"/>
    <property type="project" value="UniProtKB-UniRule"/>
</dbReference>
<dbReference type="FunFam" id="3.40.50.11240:FF:000001">
    <property type="entry name" value="Ethanolamine ammonia-lyase light chain"/>
    <property type="match status" value="1"/>
</dbReference>
<dbReference type="Gene3D" id="6.10.140.690">
    <property type="match status" value="1"/>
</dbReference>
<dbReference type="Gene3D" id="6.10.250.2060">
    <property type="match status" value="1"/>
</dbReference>
<dbReference type="Gene3D" id="3.40.50.11240">
    <property type="entry name" value="Ethanolamine ammonia-lyase light chain (EutC)"/>
    <property type="match status" value="1"/>
</dbReference>
<dbReference type="HAMAP" id="MF_00601">
    <property type="entry name" value="EutC"/>
    <property type="match status" value="1"/>
</dbReference>
<dbReference type="InterPro" id="IPR009246">
    <property type="entry name" value="EutC"/>
</dbReference>
<dbReference type="InterPro" id="IPR042251">
    <property type="entry name" value="EutC_C"/>
</dbReference>
<dbReference type="NCBIfam" id="NF003971">
    <property type="entry name" value="PRK05465.1"/>
    <property type="match status" value="1"/>
</dbReference>
<dbReference type="PANTHER" id="PTHR39330">
    <property type="entry name" value="ETHANOLAMINE AMMONIA-LYASE LIGHT CHAIN"/>
    <property type="match status" value="1"/>
</dbReference>
<dbReference type="PANTHER" id="PTHR39330:SF1">
    <property type="entry name" value="ETHANOLAMINE AMMONIA-LYASE SMALL SUBUNIT"/>
    <property type="match status" value="1"/>
</dbReference>
<dbReference type="Pfam" id="PF05985">
    <property type="entry name" value="EutC"/>
    <property type="match status" value="1"/>
</dbReference>
<dbReference type="PIRSF" id="PIRSF018982">
    <property type="entry name" value="EutC"/>
    <property type="match status" value="1"/>
</dbReference>
<proteinExistence type="inferred from homology"/>
<reference key="1">
    <citation type="journal article" date="2008" name="Genome Res.">
        <title>Comparative genome analysis of Salmonella enteritidis PT4 and Salmonella gallinarum 287/91 provides insights into evolutionary and host adaptation pathways.</title>
        <authorList>
            <person name="Thomson N.R."/>
            <person name="Clayton D.J."/>
            <person name="Windhorst D."/>
            <person name="Vernikos G."/>
            <person name="Davidson S."/>
            <person name="Churcher C."/>
            <person name="Quail M.A."/>
            <person name="Stevens M."/>
            <person name="Jones M.A."/>
            <person name="Watson M."/>
            <person name="Barron A."/>
            <person name="Layton A."/>
            <person name="Pickard D."/>
            <person name="Kingsley R.A."/>
            <person name="Bignell A."/>
            <person name="Clark L."/>
            <person name="Harris B."/>
            <person name="Ormond D."/>
            <person name="Abdellah Z."/>
            <person name="Brooks K."/>
            <person name="Cherevach I."/>
            <person name="Chillingworth T."/>
            <person name="Woodward J."/>
            <person name="Norberczak H."/>
            <person name="Lord A."/>
            <person name="Arrowsmith C."/>
            <person name="Jagels K."/>
            <person name="Moule S."/>
            <person name="Mungall K."/>
            <person name="Saunders M."/>
            <person name="Whitehead S."/>
            <person name="Chabalgoity J.A."/>
            <person name="Maskell D."/>
            <person name="Humphreys T."/>
            <person name="Roberts M."/>
            <person name="Barrow P.A."/>
            <person name="Dougan G."/>
            <person name="Parkhill J."/>
        </authorList>
    </citation>
    <scope>NUCLEOTIDE SEQUENCE [LARGE SCALE GENOMIC DNA]</scope>
    <source>
        <strain>287/91 / NCTC 13346</strain>
    </source>
</reference>
<organism>
    <name type="scientific">Salmonella gallinarum (strain 287/91 / NCTC 13346)</name>
    <dbReference type="NCBI Taxonomy" id="550538"/>
    <lineage>
        <taxon>Bacteria</taxon>
        <taxon>Pseudomonadati</taxon>
        <taxon>Pseudomonadota</taxon>
        <taxon>Gammaproteobacteria</taxon>
        <taxon>Enterobacterales</taxon>
        <taxon>Enterobacteriaceae</taxon>
        <taxon>Salmonella</taxon>
    </lineage>
</organism>
<name>EUTC_SALG2</name>
<evidence type="ECO:0000255" key="1">
    <source>
        <dbReference type="HAMAP-Rule" id="MF_00601"/>
    </source>
</evidence>
<gene>
    <name evidence="1" type="primary">eutC</name>
    <name type="ordered locus">SG2488</name>
</gene>
<sequence length="298" mass="32165">MDQKQIEEIVRSVMASMGQDVPQPVAPSTQEGAKPQCAAPTVTESCALDLGSAEAKAWIGVENPHRADVLTELRRSTAARVCTGRAGPRPRTQALLRFLADHSRSKDTVLKEVPEEWVKAQGLLEVRSEISDKNLYLTRPDMGRRLSPEAIDALKSQCVMNPDVQVVVSDGLSTDAITANYEEILPPLLAGLKQAGLNVGTPFFVRYGRVKIEDQIGEILGAKVVILLVGERPGLGQSESLSCYAVYSPRVATTVEADRTCISNIHQGGTPPVEAAAVIVDLAKRMLEQKASGINMTR</sequence>
<protein>
    <recommendedName>
        <fullName evidence="1">Ethanolamine ammonia-lyase small subunit</fullName>
        <shortName evidence="1">EAL small subunit</shortName>
        <ecNumber evidence="1">4.3.1.7</ecNumber>
    </recommendedName>
</protein>
<accession>B5RCS8</accession>